<comment type="similarity">
    <text evidence="2">Belongs to the acetyltransferase family. GNAT subfamily.</text>
</comment>
<reference key="1">
    <citation type="journal article" date="2007" name="Science">
        <title>Sea anemone genome reveals ancestral eumetazoan gene repertoire and genomic organization.</title>
        <authorList>
            <person name="Putnam N.H."/>
            <person name="Srivastava M."/>
            <person name="Hellsten U."/>
            <person name="Dirks B."/>
            <person name="Chapman J."/>
            <person name="Salamov A."/>
            <person name="Terry A."/>
            <person name="Shapiro H."/>
            <person name="Lindquist E."/>
            <person name="Kapitonov V.V."/>
            <person name="Jurka J."/>
            <person name="Genikhovich G."/>
            <person name="Grigoriev I.V."/>
            <person name="Lucas S.M."/>
            <person name="Steele R.E."/>
            <person name="Finnerty J.R."/>
            <person name="Technau U."/>
            <person name="Martindale M.Q."/>
            <person name="Rokhsar D.S."/>
        </authorList>
    </citation>
    <scope>NUCLEOTIDE SEQUENCE [LARGE SCALE GENOMIC DNA]</scope>
    <source>
        <strain>CH2 X CH6</strain>
    </source>
</reference>
<accession>A7SLC8</accession>
<feature type="chain" id="PRO_0000331392" description="N-acetyltransferase 9-like protein">
    <location>
        <begin position="1"/>
        <end position="198"/>
    </location>
</feature>
<feature type="domain" description="N-acetyltransferase" evidence="1">
    <location>
        <begin position="14"/>
        <end position="186"/>
    </location>
</feature>
<keyword id="KW-0012">Acyltransferase</keyword>
<keyword id="KW-1185">Reference proteome</keyword>
<keyword id="KW-0808">Transferase</keyword>
<evidence type="ECO:0000255" key="1">
    <source>
        <dbReference type="PROSITE-ProRule" id="PRU00532"/>
    </source>
</evidence>
<evidence type="ECO:0000305" key="2"/>
<sequence length="198" mass="22753">MKINSEVALVGNQIILVPYKEKHVPRYHEWMQSPELLEQTASERLMLQQEYDMQQSWLNDENKCTFIVLDKQKWNDNGNNEIESMAGDVNLFFNDPDDLHVAEIEIMIAEPSSRGRGLGKEALLIMMSYGISKLHVNRFTAKIGHDNEPSLSLFNKLGFTKISESEVFKEVTLKFDSNNFTNLTADVTELHYPIKTQA</sequence>
<organism>
    <name type="scientific">Nematostella vectensis</name>
    <name type="common">Starlet sea anemone</name>
    <dbReference type="NCBI Taxonomy" id="45351"/>
    <lineage>
        <taxon>Eukaryota</taxon>
        <taxon>Metazoa</taxon>
        <taxon>Cnidaria</taxon>
        <taxon>Anthozoa</taxon>
        <taxon>Hexacorallia</taxon>
        <taxon>Actiniaria</taxon>
        <taxon>Edwardsiidae</taxon>
        <taxon>Nematostella</taxon>
    </lineage>
</organism>
<protein>
    <recommendedName>
        <fullName>N-acetyltransferase 9-like protein</fullName>
        <ecNumber>2.3.1.-</ecNumber>
    </recommendedName>
</protein>
<name>NAT9_NEMVE</name>
<proteinExistence type="inferred from homology"/>
<gene>
    <name type="primary">nat9</name>
    <name type="ORF">v1g171834</name>
</gene>
<dbReference type="EC" id="2.3.1.-"/>
<dbReference type="EMBL" id="DS469697">
    <property type="protein sequence ID" value="EDO35470.1"/>
    <property type="molecule type" value="Genomic_DNA"/>
</dbReference>
<dbReference type="SMR" id="A7SLC8"/>
<dbReference type="STRING" id="45351.A7SLC8"/>
<dbReference type="EnsemblMetazoa" id="EDO35470">
    <property type="protein sequence ID" value="EDO35470"/>
    <property type="gene ID" value="NEMVEDRAFT_v1g171834"/>
</dbReference>
<dbReference type="GeneID" id="5506891"/>
<dbReference type="KEGG" id="nve:5506891"/>
<dbReference type="eggNOG" id="KOG4135">
    <property type="taxonomic scope" value="Eukaryota"/>
</dbReference>
<dbReference type="HOGENOM" id="CLU_073102_1_1_1"/>
<dbReference type="InParanoid" id="A7SLC8"/>
<dbReference type="OMA" id="WHVPRYH"/>
<dbReference type="OrthoDB" id="5043642at2759"/>
<dbReference type="PhylomeDB" id="A7SLC8"/>
<dbReference type="Proteomes" id="UP000001593">
    <property type="component" value="Unassembled WGS sequence"/>
</dbReference>
<dbReference type="GO" id="GO:0008080">
    <property type="term" value="F:N-acetyltransferase activity"/>
    <property type="evidence" value="ECO:0007669"/>
    <property type="project" value="InterPro"/>
</dbReference>
<dbReference type="FunFam" id="3.40.630.30:FF:000248">
    <property type="entry name" value="N-acetyltransferase 9-like protein"/>
    <property type="match status" value="1"/>
</dbReference>
<dbReference type="Gene3D" id="3.40.630.30">
    <property type="match status" value="1"/>
</dbReference>
<dbReference type="InterPro" id="IPR016181">
    <property type="entry name" value="Acyl_CoA_acyltransferase"/>
</dbReference>
<dbReference type="InterPro" id="IPR000182">
    <property type="entry name" value="GNAT_dom"/>
</dbReference>
<dbReference type="InterPro" id="IPR039135">
    <property type="entry name" value="NAT9-like"/>
</dbReference>
<dbReference type="PANTHER" id="PTHR13256:SF16">
    <property type="entry name" value="ALPHA_BETA-TUBULIN-N-ACETYLTRANSFERASE 9"/>
    <property type="match status" value="1"/>
</dbReference>
<dbReference type="PANTHER" id="PTHR13256">
    <property type="entry name" value="N-ACETYLTRANSFERASE 9"/>
    <property type="match status" value="1"/>
</dbReference>
<dbReference type="Pfam" id="PF13302">
    <property type="entry name" value="Acetyltransf_3"/>
    <property type="match status" value="1"/>
</dbReference>
<dbReference type="SUPFAM" id="SSF55729">
    <property type="entry name" value="Acyl-CoA N-acyltransferases (Nat)"/>
    <property type="match status" value="1"/>
</dbReference>
<dbReference type="PROSITE" id="PS51186">
    <property type="entry name" value="GNAT"/>
    <property type="match status" value="1"/>
</dbReference>